<feature type="chain" id="PRO_1000197560" description="Serine/threonine transporter SstT">
    <location>
        <begin position="1"/>
        <end position="414"/>
    </location>
</feature>
<feature type="transmembrane region" description="Helical" evidence="1">
    <location>
        <begin position="16"/>
        <end position="36"/>
    </location>
</feature>
<feature type="transmembrane region" description="Helical" evidence="1">
    <location>
        <begin position="46"/>
        <end position="66"/>
    </location>
</feature>
<feature type="transmembrane region" description="Helical" evidence="1">
    <location>
        <begin position="84"/>
        <end position="104"/>
    </location>
</feature>
<feature type="transmembrane region" description="Helical" evidence="1">
    <location>
        <begin position="143"/>
        <end position="163"/>
    </location>
</feature>
<feature type="transmembrane region" description="Helical" evidence="1">
    <location>
        <begin position="180"/>
        <end position="200"/>
    </location>
</feature>
<feature type="transmembrane region" description="Helical" evidence="1">
    <location>
        <begin position="219"/>
        <end position="239"/>
    </location>
</feature>
<feature type="transmembrane region" description="Helical" evidence="1">
    <location>
        <begin position="300"/>
        <end position="320"/>
    </location>
</feature>
<feature type="transmembrane region" description="Helical" evidence="1">
    <location>
        <begin position="332"/>
        <end position="352"/>
    </location>
</feature>
<organism>
    <name type="scientific">Salmonella enteritidis PT4 (strain P125109)</name>
    <dbReference type="NCBI Taxonomy" id="550537"/>
    <lineage>
        <taxon>Bacteria</taxon>
        <taxon>Pseudomonadati</taxon>
        <taxon>Pseudomonadota</taxon>
        <taxon>Gammaproteobacteria</taxon>
        <taxon>Enterobacterales</taxon>
        <taxon>Enterobacteriaceae</taxon>
        <taxon>Salmonella</taxon>
    </lineage>
</organism>
<sequence length="414" mass="43413">MATQRASGLLQRLAQGSLVKQILVGLVLGILLAWISKPAAEAVGLLGTLFVGALKAVAPVLVLMLVMASIANHQHGQKTNIRPILFLYLLGTFSAALAAVVFSFAFPSTLHLSSSAQDIVPPSGIVEVLRGLLMSMVSNPIDALLNANYIGILVWAVGLGFALRHGNETTKNLVNDMSNAVTFMVKLVIRFAPVGIFGLVSSTLATTGFSTLWGYAHLLVVLIGCMLLVALVVNPLLVFWKIRRNPYPLVFACLRESGVYAFFTRSSAANIPVNMALCEKLNLDRDTYSVSIPLGATINMAGAAITITVLTLAAVHTLGVPVDLPTALLLSVVASLCACGASGVAGGSLLLIPLACNMFGIPNDIAMQVVAVGFIIGVLQDSCETALNSSTDVLFTAAACQAEDERLANNALRS</sequence>
<comment type="function">
    <text evidence="1">Involved in the import of serine and threonine into the cell, with the concomitant import of sodium (symport system).</text>
</comment>
<comment type="catalytic activity">
    <reaction evidence="1">
        <text>L-serine(in) + Na(+)(in) = L-serine(out) + Na(+)(out)</text>
        <dbReference type="Rhea" id="RHEA:29575"/>
        <dbReference type="ChEBI" id="CHEBI:29101"/>
        <dbReference type="ChEBI" id="CHEBI:33384"/>
    </reaction>
    <physiologicalReaction direction="right-to-left" evidence="1">
        <dbReference type="Rhea" id="RHEA:29577"/>
    </physiologicalReaction>
</comment>
<comment type="catalytic activity">
    <reaction evidence="1">
        <text>L-threonine(in) + Na(+)(in) = L-threonine(out) + Na(+)(out)</text>
        <dbReference type="Rhea" id="RHEA:69999"/>
        <dbReference type="ChEBI" id="CHEBI:29101"/>
        <dbReference type="ChEBI" id="CHEBI:57926"/>
    </reaction>
    <physiologicalReaction direction="right-to-left" evidence="1">
        <dbReference type="Rhea" id="RHEA:70001"/>
    </physiologicalReaction>
</comment>
<comment type="subcellular location">
    <subcellularLocation>
        <location evidence="1">Cell inner membrane</location>
        <topology evidence="1">Multi-pass membrane protein</topology>
    </subcellularLocation>
</comment>
<comment type="similarity">
    <text evidence="1">Belongs to the dicarboxylate/amino acid:cation symporter (DAACS) (TC 2.A.23) family.</text>
</comment>
<dbReference type="EMBL" id="AM933172">
    <property type="protein sequence ID" value="CAR34643.1"/>
    <property type="molecule type" value="Genomic_DNA"/>
</dbReference>
<dbReference type="RefSeq" id="WP_000235363.1">
    <property type="nucleotide sequence ID" value="NC_011294.1"/>
</dbReference>
<dbReference type="SMR" id="B5QZQ4"/>
<dbReference type="KEGG" id="set:SEN3067"/>
<dbReference type="HOGENOM" id="CLU_044581_0_0_6"/>
<dbReference type="Proteomes" id="UP000000613">
    <property type="component" value="Chromosome"/>
</dbReference>
<dbReference type="GO" id="GO:0005886">
    <property type="term" value="C:plasma membrane"/>
    <property type="evidence" value="ECO:0007669"/>
    <property type="project" value="UniProtKB-SubCell"/>
</dbReference>
<dbReference type="GO" id="GO:0005295">
    <property type="term" value="F:neutral L-amino acid:sodium symporter activity"/>
    <property type="evidence" value="ECO:0007669"/>
    <property type="project" value="TreeGrafter"/>
</dbReference>
<dbReference type="GO" id="GO:0032329">
    <property type="term" value="P:serine transport"/>
    <property type="evidence" value="ECO:0007669"/>
    <property type="project" value="InterPro"/>
</dbReference>
<dbReference type="GO" id="GO:0015826">
    <property type="term" value="P:threonine transport"/>
    <property type="evidence" value="ECO:0007669"/>
    <property type="project" value="InterPro"/>
</dbReference>
<dbReference type="FunFam" id="1.10.3860.10:FF:000003">
    <property type="entry name" value="Serine/threonine transporter sstT"/>
    <property type="match status" value="1"/>
</dbReference>
<dbReference type="Gene3D" id="1.10.3860.10">
    <property type="entry name" value="Sodium:dicarboxylate symporter"/>
    <property type="match status" value="1"/>
</dbReference>
<dbReference type="HAMAP" id="MF_01582">
    <property type="entry name" value="Ser_Thr_transp_SstT"/>
    <property type="match status" value="1"/>
</dbReference>
<dbReference type="InterPro" id="IPR001991">
    <property type="entry name" value="Na-dicarboxylate_symporter"/>
</dbReference>
<dbReference type="InterPro" id="IPR036458">
    <property type="entry name" value="Na:dicarbo_symporter_sf"/>
</dbReference>
<dbReference type="InterPro" id="IPR023025">
    <property type="entry name" value="Ser_Thr_transp_SstT"/>
</dbReference>
<dbReference type="NCBIfam" id="NF010151">
    <property type="entry name" value="PRK13628.1"/>
    <property type="match status" value="1"/>
</dbReference>
<dbReference type="PANTHER" id="PTHR42865">
    <property type="entry name" value="PROTON/GLUTAMATE-ASPARTATE SYMPORTER"/>
    <property type="match status" value="1"/>
</dbReference>
<dbReference type="PANTHER" id="PTHR42865:SF8">
    <property type="entry name" value="SERINE_THREONINE TRANSPORTER SSTT"/>
    <property type="match status" value="1"/>
</dbReference>
<dbReference type="Pfam" id="PF00375">
    <property type="entry name" value="SDF"/>
    <property type="match status" value="1"/>
</dbReference>
<dbReference type="PRINTS" id="PR00173">
    <property type="entry name" value="EDTRNSPORT"/>
</dbReference>
<dbReference type="SUPFAM" id="SSF118215">
    <property type="entry name" value="Proton glutamate symport protein"/>
    <property type="match status" value="1"/>
</dbReference>
<dbReference type="PROSITE" id="PS00713">
    <property type="entry name" value="NA_DICARBOXYL_SYMP_1"/>
    <property type="match status" value="1"/>
</dbReference>
<keyword id="KW-0029">Amino-acid transport</keyword>
<keyword id="KW-0997">Cell inner membrane</keyword>
<keyword id="KW-1003">Cell membrane</keyword>
<keyword id="KW-0472">Membrane</keyword>
<keyword id="KW-0769">Symport</keyword>
<keyword id="KW-0812">Transmembrane</keyword>
<keyword id="KW-1133">Transmembrane helix</keyword>
<keyword id="KW-0813">Transport</keyword>
<name>SSTT_SALEP</name>
<evidence type="ECO:0000255" key="1">
    <source>
        <dbReference type="HAMAP-Rule" id="MF_01582"/>
    </source>
</evidence>
<gene>
    <name evidence="1" type="primary">sstT</name>
    <name type="ordered locus">SEN3067</name>
</gene>
<accession>B5QZQ4</accession>
<proteinExistence type="inferred from homology"/>
<reference key="1">
    <citation type="journal article" date="2008" name="Genome Res.">
        <title>Comparative genome analysis of Salmonella enteritidis PT4 and Salmonella gallinarum 287/91 provides insights into evolutionary and host adaptation pathways.</title>
        <authorList>
            <person name="Thomson N.R."/>
            <person name="Clayton D.J."/>
            <person name="Windhorst D."/>
            <person name="Vernikos G."/>
            <person name="Davidson S."/>
            <person name="Churcher C."/>
            <person name="Quail M.A."/>
            <person name="Stevens M."/>
            <person name="Jones M.A."/>
            <person name="Watson M."/>
            <person name="Barron A."/>
            <person name="Layton A."/>
            <person name="Pickard D."/>
            <person name="Kingsley R.A."/>
            <person name="Bignell A."/>
            <person name="Clark L."/>
            <person name="Harris B."/>
            <person name="Ormond D."/>
            <person name="Abdellah Z."/>
            <person name="Brooks K."/>
            <person name="Cherevach I."/>
            <person name="Chillingworth T."/>
            <person name="Woodward J."/>
            <person name="Norberczak H."/>
            <person name="Lord A."/>
            <person name="Arrowsmith C."/>
            <person name="Jagels K."/>
            <person name="Moule S."/>
            <person name="Mungall K."/>
            <person name="Saunders M."/>
            <person name="Whitehead S."/>
            <person name="Chabalgoity J.A."/>
            <person name="Maskell D."/>
            <person name="Humphreys T."/>
            <person name="Roberts M."/>
            <person name="Barrow P.A."/>
            <person name="Dougan G."/>
            <person name="Parkhill J."/>
        </authorList>
    </citation>
    <scope>NUCLEOTIDE SEQUENCE [LARGE SCALE GENOMIC DNA]</scope>
    <source>
        <strain>P125109</strain>
    </source>
</reference>
<protein>
    <recommendedName>
        <fullName evidence="1">Serine/threonine transporter SstT</fullName>
    </recommendedName>
    <alternativeName>
        <fullName evidence="1">Na(+)/serine-threonine symporter</fullName>
    </alternativeName>
</protein>